<dbReference type="EC" id="2.4.2.9" evidence="1"/>
<dbReference type="EMBL" id="FM178379">
    <property type="protein sequence ID" value="CAQ80073.1"/>
    <property type="molecule type" value="Genomic_DNA"/>
</dbReference>
<dbReference type="RefSeq" id="WP_012550882.1">
    <property type="nucleotide sequence ID" value="NC_011312.1"/>
</dbReference>
<dbReference type="SMR" id="B6EJU2"/>
<dbReference type="KEGG" id="vsa:VSAL_I2389"/>
<dbReference type="eggNOG" id="COG0035">
    <property type="taxonomic scope" value="Bacteria"/>
</dbReference>
<dbReference type="HOGENOM" id="CLU_067096_2_2_6"/>
<dbReference type="UniPathway" id="UPA00574">
    <property type="reaction ID" value="UER00636"/>
</dbReference>
<dbReference type="Proteomes" id="UP000001730">
    <property type="component" value="Chromosome 1"/>
</dbReference>
<dbReference type="GO" id="GO:0005525">
    <property type="term" value="F:GTP binding"/>
    <property type="evidence" value="ECO:0007669"/>
    <property type="project" value="UniProtKB-KW"/>
</dbReference>
<dbReference type="GO" id="GO:0000287">
    <property type="term" value="F:magnesium ion binding"/>
    <property type="evidence" value="ECO:0007669"/>
    <property type="project" value="UniProtKB-UniRule"/>
</dbReference>
<dbReference type="GO" id="GO:0004845">
    <property type="term" value="F:uracil phosphoribosyltransferase activity"/>
    <property type="evidence" value="ECO:0007669"/>
    <property type="project" value="UniProtKB-UniRule"/>
</dbReference>
<dbReference type="GO" id="GO:0044206">
    <property type="term" value="P:UMP salvage"/>
    <property type="evidence" value="ECO:0007669"/>
    <property type="project" value="UniProtKB-UniRule"/>
</dbReference>
<dbReference type="GO" id="GO:0006223">
    <property type="term" value="P:uracil salvage"/>
    <property type="evidence" value="ECO:0007669"/>
    <property type="project" value="InterPro"/>
</dbReference>
<dbReference type="CDD" id="cd06223">
    <property type="entry name" value="PRTases_typeI"/>
    <property type="match status" value="1"/>
</dbReference>
<dbReference type="FunFam" id="3.40.50.2020:FF:000003">
    <property type="entry name" value="Uracil phosphoribosyltransferase"/>
    <property type="match status" value="1"/>
</dbReference>
<dbReference type="Gene3D" id="3.40.50.2020">
    <property type="match status" value="1"/>
</dbReference>
<dbReference type="HAMAP" id="MF_01218_B">
    <property type="entry name" value="Upp_B"/>
    <property type="match status" value="1"/>
</dbReference>
<dbReference type="InterPro" id="IPR000836">
    <property type="entry name" value="PRibTrfase_dom"/>
</dbReference>
<dbReference type="InterPro" id="IPR029057">
    <property type="entry name" value="PRTase-like"/>
</dbReference>
<dbReference type="InterPro" id="IPR034332">
    <property type="entry name" value="Upp_B"/>
</dbReference>
<dbReference type="InterPro" id="IPR050054">
    <property type="entry name" value="UPRTase/APRTase"/>
</dbReference>
<dbReference type="InterPro" id="IPR005765">
    <property type="entry name" value="Ura_phspho_trans"/>
</dbReference>
<dbReference type="NCBIfam" id="NF001097">
    <property type="entry name" value="PRK00129.1"/>
    <property type="match status" value="1"/>
</dbReference>
<dbReference type="NCBIfam" id="TIGR01091">
    <property type="entry name" value="upp"/>
    <property type="match status" value="1"/>
</dbReference>
<dbReference type="PANTHER" id="PTHR32315">
    <property type="entry name" value="ADENINE PHOSPHORIBOSYLTRANSFERASE"/>
    <property type="match status" value="1"/>
</dbReference>
<dbReference type="PANTHER" id="PTHR32315:SF4">
    <property type="entry name" value="URACIL PHOSPHORIBOSYLTRANSFERASE, CHLOROPLASTIC"/>
    <property type="match status" value="1"/>
</dbReference>
<dbReference type="Pfam" id="PF14681">
    <property type="entry name" value="UPRTase"/>
    <property type="match status" value="1"/>
</dbReference>
<dbReference type="SUPFAM" id="SSF53271">
    <property type="entry name" value="PRTase-like"/>
    <property type="match status" value="1"/>
</dbReference>
<proteinExistence type="inferred from homology"/>
<keyword id="KW-0021">Allosteric enzyme</keyword>
<keyword id="KW-0328">Glycosyltransferase</keyword>
<keyword id="KW-0342">GTP-binding</keyword>
<keyword id="KW-0460">Magnesium</keyword>
<keyword id="KW-0547">Nucleotide-binding</keyword>
<keyword id="KW-0808">Transferase</keyword>
<comment type="function">
    <text evidence="1">Catalyzes the conversion of uracil and 5-phospho-alpha-D-ribose 1-diphosphate (PRPP) to UMP and diphosphate.</text>
</comment>
<comment type="catalytic activity">
    <reaction evidence="1">
        <text>UMP + diphosphate = 5-phospho-alpha-D-ribose 1-diphosphate + uracil</text>
        <dbReference type="Rhea" id="RHEA:13017"/>
        <dbReference type="ChEBI" id="CHEBI:17568"/>
        <dbReference type="ChEBI" id="CHEBI:33019"/>
        <dbReference type="ChEBI" id="CHEBI:57865"/>
        <dbReference type="ChEBI" id="CHEBI:58017"/>
        <dbReference type="EC" id="2.4.2.9"/>
    </reaction>
</comment>
<comment type="cofactor">
    <cofactor evidence="1">
        <name>Mg(2+)</name>
        <dbReference type="ChEBI" id="CHEBI:18420"/>
    </cofactor>
    <text evidence="1">Binds 1 Mg(2+) ion per subunit. The magnesium is bound as Mg-PRPP.</text>
</comment>
<comment type="activity regulation">
    <text evidence="1">Allosterically activated by GTP.</text>
</comment>
<comment type="pathway">
    <text evidence="1">Pyrimidine metabolism; UMP biosynthesis via salvage pathway; UMP from uracil: step 1/1.</text>
</comment>
<comment type="similarity">
    <text evidence="1">Belongs to the UPRTase family.</text>
</comment>
<accession>B6EJU2</accession>
<protein>
    <recommendedName>
        <fullName evidence="1">Uracil phosphoribosyltransferase</fullName>
        <ecNumber evidence="1">2.4.2.9</ecNumber>
    </recommendedName>
    <alternativeName>
        <fullName evidence="1">UMP pyrophosphorylase</fullName>
    </alternativeName>
    <alternativeName>
        <fullName evidence="1">UPRTase</fullName>
    </alternativeName>
</protein>
<reference key="1">
    <citation type="journal article" date="2008" name="BMC Genomics">
        <title>The genome sequence of the fish pathogen Aliivibrio salmonicida strain LFI1238 shows extensive evidence of gene decay.</title>
        <authorList>
            <person name="Hjerde E."/>
            <person name="Lorentzen M.S."/>
            <person name="Holden M.T."/>
            <person name="Seeger K."/>
            <person name="Paulsen S."/>
            <person name="Bason N."/>
            <person name="Churcher C."/>
            <person name="Harris D."/>
            <person name="Norbertczak H."/>
            <person name="Quail M.A."/>
            <person name="Sanders S."/>
            <person name="Thurston S."/>
            <person name="Parkhill J."/>
            <person name="Willassen N.P."/>
            <person name="Thomson N.R."/>
        </authorList>
    </citation>
    <scope>NUCLEOTIDE SEQUENCE [LARGE SCALE GENOMIC DNA]</scope>
    <source>
        <strain>LFI1238</strain>
    </source>
</reference>
<name>UPP_ALISL</name>
<organism>
    <name type="scientific">Aliivibrio salmonicida (strain LFI1238)</name>
    <name type="common">Vibrio salmonicida (strain LFI1238)</name>
    <dbReference type="NCBI Taxonomy" id="316275"/>
    <lineage>
        <taxon>Bacteria</taxon>
        <taxon>Pseudomonadati</taxon>
        <taxon>Pseudomonadota</taxon>
        <taxon>Gammaproteobacteria</taxon>
        <taxon>Vibrionales</taxon>
        <taxon>Vibrionaceae</taxon>
        <taxon>Aliivibrio</taxon>
    </lineage>
</organism>
<gene>
    <name evidence="1" type="primary">upp</name>
    <name type="ordered locus">VSAL_I2389</name>
</gene>
<sequence>MKVVEVKHPLIKHKIGLMREGDISTKRFRELATEVGSLLTYEATSDFETEKVTINGWNGPVEVDQIKGKKVTVVPILRAGLGMMDGVLEHIPSARISVVGIYRDEETLEPVPYFNKLASNIDERIALVVDPMLATGGSMIATLDLLKEKGCKNFKILVLVAAPEGIAALEKAHPDVELYTAAIDEKLNDKGYIIPGLGDAGDKIFGTK</sequence>
<feature type="chain" id="PRO_1000139090" description="Uracil phosphoribosyltransferase">
    <location>
        <begin position="1"/>
        <end position="208"/>
    </location>
</feature>
<feature type="binding site" evidence="1">
    <location>
        <position position="78"/>
    </location>
    <ligand>
        <name>5-phospho-alpha-D-ribose 1-diphosphate</name>
        <dbReference type="ChEBI" id="CHEBI:58017"/>
    </ligand>
</feature>
<feature type="binding site" evidence="1">
    <location>
        <position position="103"/>
    </location>
    <ligand>
        <name>5-phospho-alpha-D-ribose 1-diphosphate</name>
        <dbReference type="ChEBI" id="CHEBI:58017"/>
    </ligand>
</feature>
<feature type="binding site" evidence="1">
    <location>
        <begin position="130"/>
        <end position="138"/>
    </location>
    <ligand>
        <name>5-phospho-alpha-D-ribose 1-diphosphate</name>
        <dbReference type="ChEBI" id="CHEBI:58017"/>
    </ligand>
</feature>
<feature type="binding site" evidence="1">
    <location>
        <position position="193"/>
    </location>
    <ligand>
        <name>uracil</name>
        <dbReference type="ChEBI" id="CHEBI:17568"/>
    </ligand>
</feature>
<feature type="binding site" evidence="1">
    <location>
        <begin position="198"/>
        <end position="200"/>
    </location>
    <ligand>
        <name>uracil</name>
        <dbReference type="ChEBI" id="CHEBI:17568"/>
    </ligand>
</feature>
<feature type="binding site" evidence="1">
    <location>
        <position position="199"/>
    </location>
    <ligand>
        <name>5-phospho-alpha-D-ribose 1-diphosphate</name>
        <dbReference type="ChEBI" id="CHEBI:58017"/>
    </ligand>
</feature>
<evidence type="ECO:0000255" key="1">
    <source>
        <dbReference type="HAMAP-Rule" id="MF_01218"/>
    </source>
</evidence>